<organism>
    <name type="scientific">Culex quinquefasciatus</name>
    <name type="common">Southern house mosquito</name>
    <name type="synonym">Culex pungens</name>
    <dbReference type="NCBI Taxonomy" id="7176"/>
    <lineage>
        <taxon>Eukaryota</taxon>
        <taxon>Metazoa</taxon>
        <taxon>Ecdysozoa</taxon>
        <taxon>Arthropoda</taxon>
        <taxon>Hexapoda</taxon>
        <taxon>Insecta</taxon>
        <taxon>Pterygota</taxon>
        <taxon>Neoptera</taxon>
        <taxon>Endopterygota</taxon>
        <taxon>Diptera</taxon>
        <taxon>Nematocera</taxon>
        <taxon>Culicoidea</taxon>
        <taxon>Culicidae</taxon>
        <taxon>Culicinae</taxon>
        <taxon>Culicini</taxon>
        <taxon>Culex</taxon>
        <taxon>Culex</taxon>
    </lineage>
</organism>
<proteinExistence type="inferred from homology"/>
<evidence type="ECO:0000255" key="1">
    <source>
        <dbReference type="HAMAP-Rule" id="MF_03028"/>
    </source>
</evidence>
<evidence type="ECO:0000256" key="2">
    <source>
        <dbReference type="SAM" id="MobiDB-lite"/>
    </source>
</evidence>
<gene>
    <name type="ORF">CPIJ004969</name>
</gene>
<accession>B0WD26</accession>
<feature type="chain" id="PRO_0000370451" description="Pescadillo homolog">
    <location>
        <begin position="1"/>
        <end position="607"/>
    </location>
</feature>
<feature type="domain" description="BRCT" evidence="1">
    <location>
        <begin position="320"/>
        <end position="413"/>
    </location>
</feature>
<feature type="region of interest" description="Disordered" evidence="2">
    <location>
        <begin position="486"/>
        <end position="607"/>
    </location>
</feature>
<feature type="compositionally biased region" description="Acidic residues" evidence="2">
    <location>
        <begin position="495"/>
        <end position="511"/>
    </location>
</feature>
<feature type="compositionally biased region" description="Basic and acidic residues" evidence="2">
    <location>
        <begin position="530"/>
        <end position="549"/>
    </location>
</feature>
<feature type="compositionally biased region" description="Basic residues" evidence="2">
    <location>
        <begin position="551"/>
        <end position="562"/>
    </location>
</feature>
<feature type="compositionally biased region" description="Basic and acidic residues" evidence="2">
    <location>
        <begin position="563"/>
        <end position="607"/>
    </location>
</feature>
<sequence length="607" mass="71088">MVKRNHKFQSGEGAQYLTRKAAMRKLQLSMQDFRRLCILKGIYPREPKHRAIAQRGSTDIKILYHKKDITFLLHEPIVWTLRDRKIFNRRIAAAKGKGNNLLKNVRMANYPEIKLDHIIKERFPTFVDAIKELDDCMTLLFLFSTFPAMKTVTRDITSMARRLSIEFMHYCIASKALRKVFVSIKGYYFQAEIKGELVTWIVPHYYPYQPQRKEYVDFKIMKSFADFFTVMAGFVNFRLYNSINLVYPPQFSVSLDSEESRSNEDTFISERIAALNSDLLRSDQMGTEEEDDQIDLDLLDGDKDSEQVRKLREDAVSLNKLKNLFKGLKFFINREVPREPLVFILRCFGGRASWDRNLFVGATFDESDETITHQIVDRPSLPKQYISRDYVQPQWIFDCVNQRKLLPVNKYLIGAVLPPHLSPFNRDDAIYVPPEEAALRDGVELDAGARNGEERISDDEDEDAEQRQQVQLDYALVKAFREEKTEALNSGALEEAPEEEDDDEEAPEEDEQTKQKNEKKKKMAVVSGKIFKENPSEQKKLTKQEEALRARMVKSRHKKLYRKMLEKQKKQTKEANLLKEKRQQIDKKQRVEQTQKRKTQRKEILAK</sequence>
<protein>
    <recommendedName>
        <fullName evidence="1">Pescadillo homolog</fullName>
    </recommendedName>
</protein>
<comment type="function">
    <text evidence="1">Required for maturation of ribosomal RNAs and formation of the large ribosomal subunit.</text>
</comment>
<comment type="subcellular location">
    <subcellularLocation>
        <location evidence="1">Nucleus</location>
        <location evidence="1">Nucleolus</location>
    </subcellularLocation>
    <subcellularLocation>
        <location evidence="1">Nucleus</location>
        <location evidence="1">Nucleoplasm</location>
    </subcellularLocation>
</comment>
<comment type="similarity">
    <text evidence="1">Belongs to the pescadillo family.</text>
</comment>
<reference key="1">
    <citation type="submission" date="2007-03" db="EMBL/GenBank/DDBJ databases">
        <title>Annotation of Culex pipiens quinquefasciatus.</title>
        <authorList>
            <consortium name="The Broad Institute Genome Sequencing Platform"/>
            <person name="Atkinson P.W."/>
            <person name="Hemingway J."/>
            <person name="Christensen B.M."/>
            <person name="Higgs S."/>
            <person name="Kodira C.D."/>
            <person name="Hannick L.I."/>
            <person name="Megy K."/>
            <person name="O'Leary S.B."/>
            <person name="Pearson M."/>
            <person name="Haas B.J."/>
            <person name="Mauceli E."/>
            <person name="Wortman J.R."/>
            <person name="Lee N.H."/>
            <person name="Guigo R."/>
            <person name="Stanke M."/>
            <person name="Alvarado L."/>
            <person name="Amedeo P."/>
            <person name="Antoine C.H."/>
            <person name="Arensburger P."/>
            <person name="Bidwell S.L."/>
            <person name="Crawford M."/>
            <person name="Camaro F."/>
            <person name="Devon K."/>
            <person name="Engels R."/>
            <person name="Hammond M."/>
            <person name="Howarth C."/>
            <person name="Koehrsen M."/>
            <person name="Lawson D."/>
            <person name="Montgomery P."/>
            <person name="Nene V."/>
            <person name="Nusbaum C."/>
            <person name="Puiu D."/>
            <person name="Romero-Severson J."/>
            <person name="Severson D.W."/>
            <person name="Shumway M."/>
            <person name="Sisk P."/>
            <person name="Stolte C."/>
            <person name="Zeng Q."/>
            <person name="Eisenstadt E."/>
            <person name="Fraser-Liggett C.M."/>
            <person name="Strausberg R."/>
            <person name="Galagan J."/>
            <person name="Birren B."/>
            <person name="Collins F.H."/>
        </authorList>
    </citation>
    <scope>NUCLEOTIDE SEQUENCE [LARGE SCALE GENOMIC DNA]</scope>
    <source>
        <strain>JHB</strain>
    </source>
</reference>
<name>PESC_CULQU</name>
<dbReference type="EMBL" id="DS231893">
    <property type="protein sequence ID" value="EDS44161.1"/>
    <property type="molecule type" value="Genomic_DNA"/>
</dbReference>
<dbReference type="RefSeq" id="XP_001846610.1">
    <property type="nucleotide sequence ID" value="XM_001846558.1"/>
</dbReference>
<dbReference type="SMR" id="B0WD26"/>
<dbReference type="FunCoup" id="B0WD26">
    <property type="interactions" value="2278"/>
</dbReference>
<dbReference type="STRING" id="7176.B0WD26"/>
<dbReference type="EnsemblMetazoa" id="CPIJ004969-RA">
    <property type="protein sequence ID" value="CPIJ004969-PA"/>
    <property type="gene ID" value="CPIJ004969"/>
</dbReference>
<dbReference type="KEGG" id="cqu:CpipJ_CPIJ004969"/>
<dbReference type="VEuPathDB" id="VectorBase:CPIJ004969"/>
<dbReference type="VEuPathDB" id="VectorBase:CQUJHB001416"/>
<dbReference type="eggNOG" id="KOG2481">
    <property type="taxonomic scope" value="Eukaryota"/>
</dbReference>
<dbReference type="HOGENOM" id="CLU_019619_0_0_1"/>
<dbReference type="InParanoid" id="B0WD26"/>
<dbReference type="OMA" id="QKVTWIV"/>
<dbReference type="OrthoDB" id="10264910at2759"/>
<dbReference type="PhylomeDB" id="B0WD26"/>
<dbReference type="Proteomes" id="UP000002320">
    <property type="component" value="Unassembled WGS sequence"/>
</dbReference>
<dbReference type="GO" id="GO:0005654">
    <property type="term" value="C:nucleoplasm"/>
    <property type="evidence" value="ECO:0007669"/>
    <property type="project" value="UniProtKB-SubCell"/>
</dbReference>
<dbReference type="GO" id="GO:0070545">
    <property type="term" value="C:PeBoW complex"/>
    <property type="evidence" value="ECO:0007669"/>
    <property type="project" value="TreeGrafter"/>
</dbReference>
<dbReference type="GO" id="GO:0030687">
    <property type="term" value="C:preribosome, large subunit precursor"/>
    <property type="evidence" value="ECO:0007669"/>
    <property type="project" value="UniProtKB-UniRule"/>
</dbReference>
<dbReference type="GO" id="GO:0043021">
    <property type="term" value="F:ribonucleoprotein complex binding"/>
    <property type="evidence" value="ECO:0007669"/>
    <property type="project" value="UniProtKB-UniRule"/>
</dbReference>
<dbReference type="GO" id="GO:0003723">
    <property type="term" value="F:RNA binding"/>
    <property type="evidence" value="ECO:0007669"/>
    <property type="project" value="TreeGrafter"/>
</dbReference>
<dbReference type="GO" id="GO:0000466">
    <property type="term" value="P:maturation of 5.8S rRNA from tricistronic rRNA transcript (SSU-rRNA, 5.8S rRNA, LSU-rRNA)"/>
    <property type="evidence" value="ECO:0007669"/>
    <property type="project" value="UniProtKB-UniRule"/>
</dbReference>
<dbReference type="GO" id="GO:0000463">
    <property type="term" value="P:maturation of LSU-rRNA from tricistronic rRNA transcript (SSU-rRNA, 5.8S rRNA, LSU-rRNA)"/>
    <property type="evidence" value="ECO:0007669"/>
    <property type="project" value="UniProtKB-UniRule"/>
</dbReference>
<dbReference type="CDD" id="cd17709">
    <property type="entry name" value="BRCT_pescadillo_like"/>
    <property type="match status" value="1"/>
</dbReference>
<dbReference type="FunFam" id="3.40.50.10190:FF:000002">
    <property type="entry name" value="Pescadillo homolog"/>
    <property type="match status" value="1"/>
</dbReference>
<dbReference type="Gene3D" id="3.40.50.10190">
    <property type="entry name" value="BRCT domain"/>
    <property type="match status" value="1"/>
</dbReference>
<dbReference type="HAMAP" id="MF_03028">
    <property type="entry name" value="Pescadillo"/>
    <property type="match status" value="1"/>
</dbReference>
<dbReference type="InterPro" id="IPR001357">
    <property type="entry name" value="BRCT_dom"/>
</dbReference>
<dbReference type="InterPro" id="IPR036420">
    <property type="entry name" value="BRCT_dom_sf"/>
</dbReference>
<dbReference type="InterPro" id="IPR010613">
    <property type="entry name" value="PES"/>
</dbReference>
<dbReference type="PANTHER" id="PTHR12221">
    <property type="entry name" value="PESCADILLO - RELATED"/>
    <property type="match status" value="1"/>
</dbReference>
<dbReference type="PANTHER" id="PTHR12221:SF6">
    <property type="entry name" value="PESCADILLO HOMOLOG"/>
    <property type="match status" value="1"/>
</dbReference>
<dbReference type="Pfam" id="PF16589">
    <property type="entry name" value="BRCT_2"/>
    <property type="match status" value="1"/>
</dbReference>
<dbReference type="Pfam" id="PF06732">
    <property type="entry name" value="Pescadillo_N"/>
    <property type="match status" value="1"/>
</dbReference>
<dbReference type="SMART" id="SM00292">
    <property type="entry name" value="BRCT"/>
    <property type="match status" value="1"/>
</dbReference>
<dbReference type="SUPFAM" id="SSF52113">
    <property type="entry name" value="BRCT domain"/>
    <property type="match status" value="1"/>
</dbReference>
<dbReference type="PROSITE" id="PS50172">
    <property type="entry name" value="BRCT"/>
    <property type="match status" value="1"/>
</dbReference>
<keyword id="KW-0539">Nucleus</keyword>
<keyword id="KW-1185">Reference proteome</keyword>
<keyword id="KW-0690">Ribosome biogenesis</keyword>
<keyword id="KW-0698">rRNA processing</keyword>